<sequence>MARITVEDCLTNMDNRFQLVLVAAKRARQLSMGHQPRVAEENDKPTVIALREIADGHVGREVLDEVVAEEHAAVSSRISEDEVRAEL</sequence>
<accession>B8GQN1</accession>
<feature type="chain" id="PRO_1000133759" description="DNA-directed RNA polymerase subunit omega">
    <location>
        <begin position="1"/>
        <end position="87"/>
    </location>
</feature>
<keyword id="KW-0240">DNA-directed RNA polymerase</keyword>
<keyword id="KW-0548">Nucleotidyltransferase</keyword>
<keyword id="KW-1185">Reference proteome</keyword>
<keyword id="KW-0804">Transcription</keyword>
<keyword id="KW-0808">Transferase</keyword>
<proteinExistence type="inferred from homology"/>
<name>RPOZ_THISH</name>
<protein>
    <recommendedName>
        <fullName evidence="1">DNA-directed RNA polymerase subunit omega</fullName>
        <shortName evidence="1">RNAP omega subunit</shortName>
        <ecNumber evidence="1">2.7.7.6</ecNumber>
    </recommendedName>
    <alternativeName>
        <fullName evidence="1">RNA polymerase omega subunit</fullName>
    </alternativeName>
    <alternativeName>
        <fullName evidence="1">Transcriptase subunit omega</fullName>
    </alternativeName>
</protein>
<gene>
    <name evidence="1" type="primary">rpoZ</name>
    <name type="ordered locus">Tgr7_3186</name>
</gene>
<organism>
    <name type="scientific">Thioalkalivibrio sulfidiphilus (strain HL-EbGR7)</name>
    <dbReference type="NCBI Taxonomy" id="396588"/>
    <lineage>
        <taxon>Bacteria</taxon>
        <taxon>Pseudomonadati</taxon>
        <taxon>Pseudomonadota</taxon>
        <taxon>Gammaproteobacteria</taxon>
        <taxon>Chromatiales</taxon>
        <taxon>Ectothiorhodospiraceae</taxon>
        <taxon>Thioalkalivibrio</taxon>
    </lineage>
</organism>
<comment type="function">
    <text evidence="1">Promotes RNA polymerase assembly. Latches the N- and C-terminal regions of the beta' subunit thereby facilitating its interaction with the beta and alpha subunits.</text>
</comment>
<comment type="catalytic activity">
    <reaction evidence="1">
        <text>RNA(n) + a ribonucleoside 5'-triphosphate = RNA(n+1) + diphosphate</text>
        <dbReference type="Rhea" id="RHEA:21248"/>
        <dbReference type="Rhea" id="RHEA-COMP:14527"/>
        <dbReference type="Rhea" id="RHEA-COMP:17342"/>
        <dbReference type="ChEBI" id="CHEBI:33019"/>
        <dbReference type="ChEBI" id="CHEBI:61557"/>
        <dbReference type="ChEBI" id="CHEBI:140395"/>
        <dbReference type="EC" id="2.7.7.6"/>
    </reaction>
</comment>
<comment type="subunit">
    <text evidence="1">The RNAP catalytic core consists of 2 alpha, 1 beta, 1 beta' and 1 omega subunit. When a sigma factor is associated with the core the holoenzyme is formed, which can initiate transcription.</text>
</comment>
<comment type="similarity">
    <text evidence="1">Belongs to the RNA polymerase subunit omega family.</text>
</comment>
<reference key="1">
    <citation type="journal article" date="2011" name="Stand. Genomic Sci.">
        <title>Complete genome sequence of 'Thioalkalivibrio sulfidophilus' HL-EbGr7.</title>
        <authorList>
            <person name="Muyzer G."/>
            <person name="Sorokin D.Y."/>
            <person name="Mavromatis K."/>
            <person name="Lapidus A."/>
            <person name="Clum A."/>
            <person name="Ivanova N."/>
            <person name="Pati A."/>
            <person name="d'Haeseleer P."/>
            <person name="Woyke T."/>
            <person name="Kyrpides N.C."/>
        </authorList>
    </citation>
    <scope>NUCLEOTIDE SEQUENCE [LARGE SCALE GENOMIC DNA]</scope>
    <source>
        <strain>HL-EbGR7</strain>
    </source>
</reference>
<evidence type="ECO:0000255" key="1">
    <source>
        <dbReference type="HAMAP-Rule" id="MF_00366"/>
    </source>
</evidence>
<dbReference type="EC" id="2.7.7.6" evidence="1"/>
<dbReference type="EMBL" id="CP001339">
    <property type="protein sequence ID" value="ACL74255.1"/>
    <property type="molecule type" value="Genomic_DNA"/>
</dbReference>
<dbReference type="RefSeq" id="WP_012639717.1">
    <property type="nucleotide sequence ID" value="NC_011901.1"/>
</dbReference>
<dbReference type="SMR" id="B8GQN1"/>
<dbReference type="STRING" id="396588.Tgr7_3186"/>
<dbReference type="KEGG" id="tgr:Tgr7_3186"/>
<dbReference type="eggNOG" id="COG1758">
    <property type="taxonomic scope" value="Bacteria"/>
</dbReference>
<dbReference type="HOGENOM" id="CLU_125406_5_3_6"/>
<dbReference type="OrthoDB" id="9796300at2"/>
<dbReference type="Proteomes" id="UP000002383">
    <property type="component" value="Chromosome"/>
</dbReference>
<dbReference type="GO" id="GO:0000428">
    <property type="term" value="C:DNA-directed RNA polymerase complex"/>
    <property type="evidence" value="ECO:0007669"/>
    <property type="project" value="UniProtKB-KW"/>
</dbReference>
<dbReference type="GO" id="GO:0003677">
    <property type="term" value="F:DNA binding"/>
    <property type="evidence" value="ECO:0007669"/>
    <property type="project" value="UniProtKB-UniRule"/>
</dbReference>
<dbReference type="GO" id="GO:0003899">
    <property type="term" value="F:DNA-directed RNA polymerase activity"/>
    <property type="evidence" value="ECO:0007669"/>
    <property type="project" value="UniProtKB-UniRule"/>
</dbReference>
<dbReference type="GO" id="GO:0006351">
    <property type="term" value="P:DNA-templated transcription"/>
    <property type="evidence" value="ECO:0007669"/>
    <property type="project" value="UniProtKB-UniRule"/>
</dbReference>
<dbReference type="Gene3D" id="3.90.940.10">
    <property type="match status" value="1"/>
</dbReference>
<dbReference type="HAMAP" id="MF_00366">
    <property type="entry name" value="RNApol_bact_RpoZ"/>
    <property type="match status" value="1"/>
</dbReference>
<dbReference type="InterPro" id="IPR003716">
    <property type="entry name" value="DNA-dir_RNA_pol_omega"/>
</dbReference>
<dbReference type="InterPro" id="IPR006110">
    <property type="entry name" value="Pol_omega/Rpo6/RPB6"/>
</dbReference>
<dbReference type="InterPro" id="IPR036161">
    <property type="entry name" value="RPB6/omega-like_sf"/>
</dbReference>
<dbReference type="NCBIfam" id="TIGR00690">
    <property type="entry name" value="rpoZ"/>
    <property type="match status" value="1"/>
</dbReference>
<dbReference type="PANTHER" id="PTHR34476">
    <property type="entry name" value="DNA-DIRECTED RNA POLYMERASE SUBUNIT OMEGA"/>
    <property type="match status" value="1"/>
</dbReference>
<dbReference type="PANTHER" id="PTHR34476:SF1">
    <property type="entry name" value="DNA-DIRECTED RNA POLYMERASE SUBUNIT OMEGA"/>
    <property type="match status" value="1"/>
</dbReference>
<dbReference type="Pfam" id="PF01192">
    <property type="entry name" value="RNA_pol_Rpb6"/>
    <property type="match status" value="1"/>
</dbReference>
<dbReference type="SMART" id="SM01409">
    <property type="entry name" value="RNA_pol_Rpb6"/>
    <property type="match status" value="1"/>
</dbReference>
<dbReference type="SUPFAM" id="SSF63562">
    <property type="entry name" value="RPB6/omega subunit-like"/>
    <property type="match status" value="1"/>
</dbReference>